<proteinExistence type="inferred from homology"/>
<organism>
    <name type="scientific">Saccharolobus islandicus (strain M.16.27)</name>
    <name type="common">Sulfolobus islandicus</name>
    <dbReference type="NCBI Taxonomy" id="427318"/>
    <lineage>
        <taxon>Archaea</taxon>
        <taxon>Thermoproteota</taxon>
        <taxon>Thermoprotei</taxon>
        <taxon>Sulfolobales</taxon>
        <taxon>Sulfolobaceae</taxon>
        <taxon>Saccharolobus</taxon>
    </lineage>
</organism>
<name>KAE1_SACI3</name>
<sequence length="331" mass="36198">MLVLGIESTAHTLGVGIAKDQPPYILANERDTFVPKEGGMKPGDLLKHHAEVSGTILRRALEKANISINDINYIAVALGPGIGPALRVGATLARALSLKYNKKLVPVNHGIGHIEIGYLTTEAKDPLILYLSGGNTIITTFYKGRFRIFGETLDIALGNMMDVFVREVNLAPPYIINGKHAIDICSEKGSKLLKLPYVVKGQDMSFSGLLTAALRLVGKEKLEDICYSIREIAFDMLLEATERALALTSKKELMIVGGVAASVSLRKKLEELGKEWDVQIKIVPPEFAGDNGAMIAYAGMLAASKGVFIDVDKSYIRPRWRVDEVDIPWRN</sequence>
<keyword id="KW-0012">Acyltransferase</keyword>
<keyword id="KW-0963">Cytoplasm</keyword>
<keyword id="KW-0408">Iron</keyword>
<keyword id="KW-0479">Metal-binding</keyword>
<keyword id="KW-0808">Transferase</keyword>
<keyword id="KW-0819">tRNA processing</keyword>
<evidence type="ECO:0000255" key="1">
    <source>
        <dbReference type="HAMAP-Rule" id="MF_01446"/>
    </source>
</evidence>
<dbReference type="EC" id="2.3.1.234" evidence="1"/>
<dbReference type="EMBL" id="CP001401">
    <property type="protein sequence ID" value="ACP55664.1"/>
    <property type="molecule type" value="Genomic_DNA"/>
</dbReference>
<dbReference type="RefSeq" id="WP_012711653.1">
    <property type="nucleotide sequence ID" value="NC_012632.1"/>
</dbReference>
<dbReference type="SMR" id="C3N6N9"/>
<dbReference type="GeneID" id="84062028"/>
<dbReference type="KEGG" id="sim:M1627_1789"/>
<dbReference type="HOGENOM" id="CLU_023208_2_2_2"/>
<dbReference type="Proteomes" id="UP000002307">
    <property type="component" value="Chromosome"/>
</dbReference>
<dbReference type="GO" id="GO:0005737">
    <property type="term" value="C:cytoplasm"/>
    <property type="evidence" value="ECO:0007669"/>
    <property type="project" value="UniProtKB-SubCell"/>
</dbReference>
<dbReference type="GO" id="GO:0000408">
    <property type="term" value="C:EKC/KEOPS complex"/>
    <property type="evidence" value="ECO:0007669"/>
    <property type="project" value="InterPro"/>
</dbReference>
<dbReference type="GO" id="GO:0005506">
    <property type="term" value="F:iron ion binding"/>
    <property type="evidence" value="ECO:0007669"/>
    <property type="project" value="UniProtKB-UniRule"/>
</dbReference>
<dbReference type="GO" id="GO:0061711">
    <property type="term" value="F:N(6)-L-threonylcarbamoyladenine synthase activity"/>
    <property type="evidence" value="ECO:0007669"/>
    <property type="project" value="UniProtKB-EC"/>
</dbReference>
<dbReference type="GO" id="GO:0002949">
    <property type="term" value="P:tRNA threonylcarbamoyladenosine modification"/>
    <property type="evidence" value="ECO:0007669"/>
    <property type="project" value="UniProtKB-UniRule"/>
</dbReference>
<dbReference type="FunFam" id="3.30.420.40:FF:000229">
    <property type="entry name" value="tRNA N6-adenosine threonylcarbamoyltransferase"/>
    <property type="match status" value="1"/>
</dbReference>
<dbReference type="Gene3D" id="3.30.420.40">
    <property type="match status" value="2"/>
</dbReference>
<dbReference type="HAMAP" id="MF_01446">
    <property type="entry name" value="Kae1"/>
    <property type="match status" value="1"/>
</dbReference>
<dbReference type="InterPro" id="IPR043129">
    <property type="entry name" value="ATPase_NBD"/>
</dbReference>
<dbReference type="InterPro" id="IPR000905">
    <property type="entry name" value="Gcp-like_dom"/>
</dbReference>
<dbReference type="InterPro" id="IPR017861">
    <property type="entry name" value="KAE1/TsaD"/>
</dbReference>
<dbReference type="InterPro" id="IPR034680">
    <property type="entry name" value="Kae1_archaea_euk"/>
</dbReference>
<dbReference type="NCBIfam" id="TIGR03722">
    <property type="entry name" value="arch_KAE1"/>
    <property type="match status" value="1"/>
</dbReference>
<dbReference type="NCBIfam" id="TIGR00329">
    <property type="entry name" value="gcp_kae1"/>
    <property type="match status" value="1"/>
</dbReference>
<dbReference type="PANTHER" id="PTHR11735">
    <property type="entry name" value="TRNA N6-ADENOSINE THREONYLCARBAMOYLTRANSFERASE"/>
    <property type="match status" value="1"/>
</dbReference>
<dbReference type="PANTHER" id="PTHR11735:SF14">
    <property type="entry name" value="TRNA N6-ADENOSINE THREONYLCARBAMOYLTRANSFERASE"/>
    <property type="match status" value="1"/>
</dbReference>
<dbReference type="Pfam" id="PF00814">
    <property type="entry name" value="TsaD"/>
    <property type="match status" value="1"/>
</dbReference>
<dbReference type="PRINTS" id="PR00789">
    <property type="entry name" value="OSIALOPTASE"/>
</dbReference>
<dbReference type="SUPFAM" id="SSF53067">
    <property type="entry name" value="Actin-like ATPase domain"/>
    <property type="match status" value="1"/>
</dbReference>
<accession>C3N6N9</accession>
<comment type="function">
    <text evidence="1">Required for the formation of a threonylcarbamoyl group on adenosine at position 37 (t(6)A37) in tRNAs that read codons beginning with adenine. Is probably involved in the transfer of the threonylcarbamoyl moiety of threonylcarbamoyl-AMP (TC-AMP) to the N6 group of A37.</text>
</comment>
<comment type="catalytic activity">
    <reaction evidence="1">
        <text>L-threonylcarbamoyladenylate + adenosine(37) in tRNA = N(6)-L-threonylcarbamoyladenosine(37) in tRNA + AMP + H(+)</text>
        <dbReference type="Rhea" id="RHEA:37059"/>
        <dbReference type="Rhea" id="RHEA-COMP:10162"/>
        <dbReference type="Rhea" id="RHEA-COMP:10163"/>
        <dbReference type="ChEBI" id="CHEBI:15378"/>
        <dbReference type="ChEBI" id="CHEBI:73682"/>
        <dbReference type="ChEBI" id="CHEBI:74411"/>
        <dbReference type="ChEBI" id="CHEBI:74418"/>
        <dbReference type="ChEBI" id="CHEBI:456215"/>
        <dbReference type="EC" id="2.3.1.234"/>
    </reaction>
</comment>
<comment type="cofactor">
    <cofactor evidence="1">
        <name>Fe(2+)</name>
        <dbReference type="ChEBI" id="CHEBI:29033"/>
    </cofactor>
    <text evidence="1">Binds 1 Fe(2+) ion per subunit.</text>
</comment>
<comment type="subcellular location">
    <subcellularLocation>
        <location evidence="1">Cytoplasm</location>
    </subcellularLocation>
</comment>
<comment type="similarity">
    <text evidence="1">Belongs to the KAE1 / TsaD family.</text>
</comment>
<feature type="chain" id="PRO_1000215313" description="tRNA N6-adenosine threonylcarbamoyltransferase">
    <location>
        <begin position="1"/>
        <end position="331"/>
    </location>
</feature>
<feature type="binding site" evidence="1">
    <location>
        <position position="109"/>
    </location>
    <ligand>
        <name>Fe cation</name>
        <dbReference type="ChEBI" id="CHEBI:24875"/>
    </ligand>
</feature>
<feature type="binding site" evidence="1">
    <location>
        <position position="113"/>
    </location>
    <ligand>
        <name>Fe cation</name>
        <dbReference type="ChEBI" id="CHEBI:24875"/>
    </ligand>
</feature>
<feature type="binding site" evidence="1">
    <location>
        <begin position="130"/>
        <end position="134"/>
    </location>
    <ligand>
        <name>substrate</name>
    </ligand>
</feature>
<feature type="binding site" evidence="1">
    <location>
        <position position="130"/>
    </location>
    <ligand>
        <name>Fe cation</name>
        <dbReference type="ChEBI" id="CHEBI:24875"/>
    </ligand>
</feature>
<feature type="binding site" evidence="1">
    <location>
        <position position="162"/>
    </location>
    <ligand>
        <name>substrate</name>
    </ligand>
</feature>
<feature type="binding site" evidence="1">
    <location>
        <position position="183"/>
    </location>
    <ligand>
        <name>substrate</name>
    </ligand>
</feature>
<feature type="binding site" evidence="1">
    <location>
        <position position="262"/>
    </location>
    <ligand>
        <name>substrate</name>
    </ligand>
</feature>
<feature type="binding site" evidence="1">
    <location>
        <position position="290"/>
    </location>
    <ligand>
        <name>Fe cation</name>
        <dbReference type="ChEBI" id="CHEBI:24875"/>
    </ligand>
</feature>
<gene>
    <name evidence="1" type="primary">kae1</name>
    <name type="ordered locus">M1627_1789</name>
</gene>
<protein>
    <recommendedName>
        <fullName evidence="1">tRNA N6-adenosine threonylcarbamoyltransferase</fullName>
        <ecNumber evidence="1">2.3.1.234</ecNumber>
    </recommendedName>
    <alternativeName>
        <fullName evidence="1">N6-L-threonylcarbamoyladenine synthase</fullName>
        <shortName evidence="1">t(6)A synthase</shortName>
    </alternativeName>
    <alternativeName>
        <fullName evidence="1">t(6)A37 threonylcarbamoyladenosine biosynthesis protein Kae1</fullName>
    </alternativeName>
    <alternativeName>
        <fullName evidence="1">tRNA threonylcarbamoyladenosine biosynthesis protein Kae1</fullName>
    </alternativeName>
</protein>
<reference key="1">
    <citation type="journal article" date="2009" name="Proc. Natl. Acad. Sci. U.S.A.">
        <title>Biogeography of the Sulfolobus islandicus pan-genome.</title>
        <authorList>
            <person name="Reno M.L."/>
            <person name="Held N.L."/>
            <person name="Fields C.J."/>
            <person name="Burke P.V."/>
            <person name="Whitaker R.J."/>
        </authorList>
    </citation>
    <scope>NUCLEOTIDE SEQUENCE [LARGE SCALE GENOMIC DNA]</scope>
    <source>
        <strain>M.16.27</strain>
    </source>
</reference>